<sequence>MSWKAYVDDHLCCEIDGQNLTSAAILGHDGSVWAQSPNFPQFKPEENAGIVKDFEEPGHLAPTGLFLGGTKYMVIQGEPGVVIRGKKGTGGITIKKTGMALILGIYDEPMTPGQCNLVVERLGDYLIDQGY</sequence>
<name>PROF3_WHEAT</name>
<evidence type="ECO:0000250" key="1"/>
<evidence type="ECO:0000305" key="2"/>
<accession>P49234</accession>
<feature type="initiator methionine" description="Removed" evidence="1">
    <location>
        <position position="1"/>
    </location>
</feature>
<feature type="chain" id="PRO_0000199679" description="Profilin-3">
    <location>
        <begin position="2"/>
        <end position="131"/>
    </location>
</feature>
<protein>
    <recommendedName>
        <fullName>Profilin-3</fullName>
    </recommendedName>
</protein>
<organism>
    <name type="scientific">Triticum aestivum</name>
    <name type="common">Wheat</name>
    <dbReference type="NCBI Taxonomy" id="4565"/>
    <lineage>
        <taxon>Eukaryota</taxon>
        <taxon>Viridiplantae</taxon>
        <taxon>Streptophyta</taxon>
        <taxon>Embryophyta</taxon>
        <taxon>Tracheophyta</taxon>
        <taxon>Spermatophyta</taxon>
        <taxon>Magnoliopsida</taxon>
        <taxon>Liliopsida</taxon>
        <taxon>Poales</taxon>
        <taxon>Poaceae</taxon>
        <taxon>BOP clade</taxon>
        <taxon>Pooideae</taxon>
        <taxon>Triticodae</taxon>
        <taxon>Triticeae</taxon>
        <taxon>Triticinae</taxon>
        <taxon>Triticum</taxon>
    </lineage>
</organism>
<gene>
    <name type="primary">PRO3</name>
</gene>
<proteinExistence type="evidence at transcript level"/>
<comment type="function">
    <text>Binds to actin and affects the structure of the cytoskeleton. At high concentrations, profilin prevents the polymerization of actin, whereas it enhances it at low concentrations. By binding to PIP2, it inhibits the formation of IP3 and DG.</text>
</comment>
<comment type="subunit">
    <text>Occurs in many kinds of cells as a complex with monomeric actin in a 1:1 ratio.</text>
</comment>
<comment type="subcellular location">
    <subcellularLocation>
        <location>Cytoplasm</location>
        <location>Cytoskeleton</location>
    </subcellularLocation>
</comment>
<comment type="similarity">
    <text evidence="2">Belongs to the profilin family.</text>
</comment>
<keyword id="KW-0009">Actin-binding</keyword>
<keyword id="KW-0963">Cytoplasm</keyword>
<keyword id="KW-0206">Cytoskeleton</keyword>
<keyword id="KW-1185">Reference proteome</keyword>
<dbReference type="EMBL" id="X89827">
    <property type="protein sequence ID" value="CAA61945.2"/>
    <property type="molecule type" value="mRNA"/>
</dbReference>
<dbReference type="PIR" id="T06554">
    <property type="entry name" value="T06554"/>
</dbReference>
<dbReference type="SMR" id="P49234"/>
<dbReference type="STRING" id="4565.P49234"/>
<dbReference type="Allergome" id="3500">
    <property type="allergen name" value="Tri a 12.0103"/>
</dbReference>
<dbReference type="Allergome" id="767">
    <property type="allergen name" value="Tri a 12"/>
</dbReference>
<dbReference type="Proteomes" id="UP000019116">
    <property type="component" value="Unplaced"/>
</dbReference>
<dbReference type="ExpressionAtlas" id="P49234">
    <property type="expression patterns" value="baseline"/>
</dbReference>
<dbReference type="GO" id="GO:0005938">
    <property type="term" value="C:cell cortex"/>
    <property type="evidence" value="ECO:0000318"/>
    <property type="project" value="GO_Central"/>
</dbReference>
<dbReference type="GO" id="GO:0005856">
    <property type="term" value="C:cytoskeleton"/>
    <property type="evidence" value="ECO:0007669"/>
    <property type="project" value="UniProtKB-SubCell"/>
</dbReference>
<dbReference type="GO" id="GO:0003785">
    <property type="term" value="F:actin monomer binding"/>
    <property type="evidence" value="ECO:0000318"/>
    <property type="project" value="GO_Central"/>
</dbReference>
<dbReference type="CDD" id="cd00148">
    <property type="entry name" value="PROF"/>
    <property type="match status" value="1"/>
</dbReference>
<dbReference type="FunFam" id="3.30.450.30:FF:000001">
    <property type="entry name" value="Profilin"/>
    <property type="match status" value="1"/>
</dbReference>
<dbReference type="Gene3D" id="3.30.450.30">
    <property type="entry name" value="Dynein light chain 2a, cytoplasmic"/>
    <property type="match status" value="1"/>
</dbReference>
<dbReference type="InterPro" id="IPR048278">
    <property type="entry name" value="PFN"/>
</dbReference>
<dbReference type="InterPro" id="IPR005455">
    <property type="entry name" value="PFN_euk"/>
</dbReference>
<dbReference type="InterPro" id="IPR036140">
    <property type="entry name" value="PFN_sf"/>
</dbReference>
<dbReference type="PANTHER" id="PTHR11604">
    <property type="entry name" value="PROFILIN"/>
    <property type="match status" value="1"/>
</dbReference>
<dbReference type="PANTHER" id="PTHR11604:SF67">
    <property type="entry name" value="PROFILIN LP04"/>
    <property type="match status" value="1"/>
</dbReference>
<dbReference type="Pfam" id="PF00235">
    <property type="entry name" value="Profilin"/>
    <property type="match status" value="1"/>
</dbReference>
<dbReference type="PRINTS" id="PR00392">
    <property type="entry name" value="PROFILIN"/>
</dbReference>
<dbReference type="PRINTS" id="PR01640">
    <property type="entry name" value="PROFILINPLNT"/>
</dbReference>
<dbReference type="SMART" id="SM00392">
    <property type="entry name" value="PROF"/>
    <property type="match status" value="1"/>
</dbReference>
<dbReference type="SUPFAM" id="SSF55770">
    <property type="entry name" value="Profilin (actin-binding protein)"/>
    <property type="match status" value="1"/>
</dbReference>
<reference key="1">
    <citation type="journal article" date="1994" name="Int. Arch. Allergy Immunol.">
        <title>Polymerase chain reaction based cDNA cloning of wheat profilin: a potential plant allergen.</title>
        <authorList>
            <person name="Rihs H.-P."/>
            <person name="Rozynek P."/>
            <person name="May-Taube K."/>
            <person name="Welticke B."/>
            <person name="Baur X."/>
        </authorList>
    </citation>
    <scope>NUCLEOTIDE SEQUENCE [MRNA]</scope>
    <source>
        <strain>cv. TAM 107</strain>
    </source>
</reference>